<accession>Q8U526</accession>
<accession>Q8UBU1</accession>
<comment type="function">
    <text evidence="1">Essential cell division protein that coordinates cell division and chromosome segregation. The N-terminus is involved in assembly of the cell-division machinery. The C-terminus functions as a DNA motor that moves dsDNA in an ATP-dependent manner towards the dif recombination site, which is located within the replication terminus region. Translocation stops specifically at Xer-dif sites, where FtsK interacts with the Xer recombinase, allowing activation of chromosome unlinking by recombination. FtsK orienting polar sequences (KOPS) guide the direction of DNA translocation. FtsK can remove proteins from DNA as it translocates, but translocation stops specifically at XerCD-dif site, thereby preventing removal of XerC and XerD from dif (By similarity).</text>
</comment>
<comment type="subunit">
    <text evidence="1">Homohexamer. Forms a ring that surrounds DNA (By similarity).</text>
</comment>
<comment type="subcellular location">
    <subcellularLocation>
        <location evidence="1">Cell inner membrane</location>
        <topology evidence="1">Multi-pass membrane protein</topology>
    </subcellularLocation>
    <text evidence="1">Located at the septum.</text>
</comment>
<comment type="domain">
    <text evidence="1">Consists of an N-terminal domain, which is sufficient for the localization to the septal ring and is required for cell division, followed by a linker domain, and a C-terminal domain, which forms the translocation motor involved in chromosome segregation. The C-terminal domain can be further subdivided into alpha, beta and gamma subdomains. The alpha and beta subdomains multimerise to produce a hexameric ring, contain the nucleotide binding motif and form the DNA pump. The gamma subdomain is a regulatory subdomain that controls translocation of DNA by recognition of KOPS motifs and interacts with XerD recombinase (By similarity).</text>
</comment>
<comment type="similarity">
    <text evidence="5">Belongs to the FtsK/SpoIIIE/SftA family.</text>
</comment>
<dbReference type="EMBL" id="AE007869">
    <property type="protein sequence ID" value="AAK88474.2"/>
    <property type="molecule type" value="Genomic_DNA"/>
</dbReference>
<dbReference type="PIR" id="A97690">
    <property type="entry name" value="A97690"/>
</dbReference>
<dbReference type="PIR" id="AF2915">
    <property type="entry name" value="AF2915"/>
</dbReference>
<dbReference type="RefSeq" id="NP_355689.2">
    <property type="nucleotide sequence ID" value="NC_003062.2"/>
</dbReference>
<dbReference type="SMR" id="Q8U526"/>
<dbReference type="STRING" id="176299.Atu2759"/>
<dbReference type="EnsemblBacteria" id="AAK88474">
    <property type="protein sequence ID" value="AAK88474"/>
    <property type="gene ID" value="Atu2759"/>
</dbReference>
<dbReference type="KEGG" id="atu:Atu2759"/>
<dbReference type="PATRIC" id="fig|176299.10.peg.2768"/>
<dbReference type="eggNOG" id="COG1674">
    <property type="taxonomic scope" value="Bacteria"/>
</dbReference>
<dbReference type="HOGENOM" id="CLU_001981_6_1_5"/>
<dbReference type="OrthoDB" id="9807790at2"/>
<dbReference type="PhylomeDB" id="Q8U526"/>
<dbReference type="BioCyc" id="AGRO:ATU2759-MONOMER"/>
<dbReference type="Proteomes" id="UP000000813">
    <property type="component" value="Chromosome circular"/>
</dbReference>
<dbReference type="GO" id="GO:0005886">
    <property type="term" value="C:plasma membrane"/>
    <property type="evidence" value="ECO:0007669"/>
    <property type="project" value="UniProtKB-SubCell"/>
</dbReference>
<dbReference type="GO" id="GO:0005524">
    <property type="term" value="F:ATP binding"/>
    <property type="evidence" value="ECO:0007669"/>
    <property type="project" value="UniProtKB-KW"/>
</dbReference>
<dbReference type="GO" id="GO:0016887">
    <property type="term" value="F:ATP hydrolysis activity"/>
    <property type="evidence" value="ECO:0007669"/>
    <property type="project" value="InterPro"/>
</dbReference>
<dbReference type="GO" id="GO:0003677">
    <property type="term" value="F:DNA binding"/>
    <property type="evidence" value="ECO:0007669"/>
    <property type="project" value="UniProtKB-KW"/>
</dbReference>
<dbReference type="GO" id="GO:0051301">
    <property type="term" value="P:cell division"/>
    <property type="evidence" value="ECO:0007669"/>
    <property type="project" value="UniProtKB-KW"/>
</dbReference>
<dbReference type="GO" id="GO:0007059">
    <property type="term" value="P:chromosome segregation"/>
    <property type="evidence" value="ECO:0007669"/>
    <property type="project" value="UniProtKB-KW"/>
</dbReference>
<dbReference type="CDD" id="cd01127">
    <property type="entry name" value="TrwB_TraG_TraD_VirD4"/>
    <property type="match status" value="1"/>
</dbReference>
<dbReference type="Gene3D" id="3.30.980.40">
    <property type="match status" value="1"/>
</dbReference>
<dbReference type="Gene3D" id="3.40.50.300">
    <property type="entry name" value="P-loop containing nucleotide triphosphate hydrolases"/>
    <property type="match status" value="1"/>
</dbReference>
<dbReference type="Gene3D" id="1.10.10.10">
    <property type="entry name" value="Winged helix-like DNA-binding domain superfamily/Winged helix DNA-binding domain"/>
    <property type="match status" value="1"/>
</dbReference>
<dbReference type="InterPro" id="IPR003593">
    <property type="entry name" value="AAA+_ATPase"/>
</dbReference>
<dbReference type="InterPro" id="IPR050206">
    <property type="entry name" value="FtsK/SpoIIIE/SftA"/>
</dbReference>
<dbReference type="InterPro" id="IPR025199">
    <property type="entry name" value="FtsK_4TM"/>
</dbReference>
<dbReference type="InterPro" id="IPR041027">
    <property type="entry name" value="FtsK_alpha"/>
</dbReference>
<dbReference type="InterPro" id="IPR002543">
    <property type="entry name" value="FtsK_dom"/>
</dbReference>
<dbReference type="InterPro" id="IPR018541">
    <property type="entry name" value="Ftsk_gamma"/>
</dbReference>
<dbReference type="InterPro" id="IPR027417">
    <property type="entry name" value="P-loop_NTPase"/>
</dbReference>
<dbReference type="InterPro" id="IPR036388">
    <property type="entry name" value="WH-like_DNA-bd_sf"/>
</dbReference>
<dbReference type="InterPro" id="IPR036390">
    <property type="entry name" value="WH_DNA-bd_sf"/>
</dbReference>
<dbReference type="PANTHER" id="PTHR22683:SF41">
    <property type="entry name" value="DNA TRANSLOCASE FTSK"/>
    <property type="match status" value="1"/>
</dbReference>
<dbReference type="PANTHER" id="PTHR22683">
    <property type="entry name" value="SPORULATION PROTEIN RELATED"/>
    <property type="match status" value="1"/>
</dbReference>
<dbReference type="Pfam" id="PF13491">
    <property type="entry name" value="FtsK_4TM"/>
    <property type="match status" value="1"/>
</dbReference>
<dbReference type="Pfam" id="PF17854">
    <property type="entry name" value="FtsK_alpha"/>
    <property type="match status" value="1"/>
</dbReference>
<dbReference type="Pfam" id="PF09397">
    <property type="entry name" value="FtsK_gamma"/>
    <property type="match status" value="1"/>
</dbReference>
<dbReference type="Pfam" id="PF01580">
    <property type="entry name" value="FtsK_SpoIIIE"/>
    <property type="match status" value="1"/>
</dbReference>
<dbReference type="SMART" id="SM00382">
    <property type="entry name" value="AAA"/>
    <property type="match status" value="1"/>
</dbReference>
<dbReference type="SMART" id="SM00843">
    <property type="entry name" value="Ftsk_gamma"/>
    <property type="match status" value="1"/>
</dbReference>
<dbReference type="SUPFAM" id="SSF52540">
    <property type="entry name" value="P-loop containing nucleoside triphosphate hydrolases"/>
    <property type="match status" value="1"/>
</dbReference>
<dbReference type="SUPFAM" id="SSF46785">
    <property type="entry name" value="Winged helix' DNA-binding domain"/>
    <property type="match status" value="1"/>
</dbReference>
<dbReference type="PROSITE" id="PS50901">
    <property type="entry name" value="FTSK"/>
    <property type="match status" value="1"/>
</dbReference>
<reference key="1">
    <citation type="journal article" date="2001" name="Science">
        <title>The genome of the natural genetic engineer Agrobacterium tumefaciens C58.</title>
        <authorList>
            <person name="Wood D.W."/>
            <person name="Setubal J.C."/>
            <person name="Kaul R."/>
            <person name="Monks D.E."/>
            <person name="Kitajima J.P."/>
            <person name="Okura V.K."/>
            <person name="Zhou Y."/>
            <person name="Chen L."/>
            <person name="Wood G.E."/>
            <person name="Almeida N.F. Jr."/>
            <person name="Woo L."/>
            <person name="Chen Y."/>
            <person name="Paulsen I.T."/>
            <person name="Eisen J.A."/>
            <person name="Karp P.D."/>
            <person name="Bovee D. Sr."/>
            <person name="Chapman P."/>
            <person name="Clendenning J."/>
            <person name="Deatherage G."/>
            <person name="Gillet W."/>
            <person name="Grant C."/>
            <person name="Kutyavin T."/>
            <person name="Levy R."/>
            <person name="Li M.-J."/>
            <person name="McClelland E."/>
            <person name="Palmieri A."/>
            <person name="Raymond C."/>
            <person name="Rouse G."/>
            <person name="Saenphimmachak C."/>
            <person name="Wu Z."/>
            <person name="Romero P."/>
            <person name="Gordon D."/>
            <person name="Zhang S."/>
            <person name="Yoo H."/>
            <person name="Tao Y."/>
            <person name="Biddle P."/>
            <person name="Jung M."/>
            <person name="Krespan W."/>
            <person name="Perry M."/>
            <person name="Gordon-Kamm B."/>
            <person name="Liao L."/>
            <person name="Kim S."/>
            <person name="Hendrick C."/>
            <person name="Zhao Z.-Y."/>
            <person name="Dolan M."/>
            <person name="Chumley F."/>
            <person name="Tingey S.V."/>
            <person name="Tomb J.-F."/>
            <person name="Gordon M.P."/>
            <person name="Olson M.V."/>
            <person name="Nester E.W."/>
        </authorList>
    </citation>
    <scope>NUCLEOTIDE SEQUENCE [LARGE SCALE GENOMIC DNA]</scope>
    <source>
        <strain>C58 / ATCC 33970</strain>
    </source>
</reference>
<reference key="2">
    <citation type="journal article" date="2001" name="Science">
        <title>Genome sequence of the plant pathogen and biotechnology agent Agrobacterium tumefaciens C58.</title>
        <authorList>
            <person name="Goodner B."/>
            <person name="Hinkle G."/>
            <person name="Gattung S."/>
            <person name="Miller N."/>
            <person name="Blanchard M."/>
            <person name="Qurollo B."/>
            <person name="Goldman B.S."/>
            <person name="Cao Y."/>
            <person name="Askenazi M."/>
            <person name="Halling C."/>
            <person name="Mullin L."/>
            <person name="Houmiel K."/>
            <person name="Gordon J."/>
            <person name="Vaudin M."/>
            <person name="Iartchouk O."/>
            <person name="Epp A."/>
            <person name="Liu F."/>
            <person name="Wollam C."/>
            <person name="Allinger M."/>
            <person name="Doughty D."/>
            <person name="Scott C."/>
            <person name="Lappas C."/>
            <person name="Markelz B."/>
            <person name="Flanagan C."/>
            <person name="Crowell C."/>
            <person name="Gurson J."/>
            <person name="Lomo C."/>
            <person name="Sear C."/>
            <person name="Strub G."/>
            <person name="Cielo C."/>
            <person name="Slater S."/>
        </authorList>
    </citation>
    <scope>NUCLEOTIDE SEQUENCE [LARGE SCALE GENOMIC DNA]</scope>
    <source>
        <strain>C58 / ATCC 33970</strain>
    </source>
</reference>
<protein>
    <recommendedName>
        <fullName>DNA translocase FtsK</fullName>
    </recommendedName>
</protein>
<organism>
    <name type="scientific">Agrobacterium fabrum (strain C58 / ATCC 33970)</name>
    <name type="common">Agrobacterium tumefaciens (strain C58)</name>
    <dbReference type="NCBI Taxonomy" id="176299"/>
    <lineage>
        <taxon>Bacteria</taxon>
        <taxon>Pseudomonadati</taxon>
        <taxon>Pseudomonadota</taxon>
        <taxon>Alphaproteobacteria</taxon>
        <taxon>Hyphomicrobiales</taxon>
        <taxon>Rhizobiaceae</taxon>
        <taxon>Rhizobium/Agrobacterium group</taxon>
        <taxon>Agrobacterium</taxon>
        <taxon>Agrobacterium tumefaciens complex</taxon>
    </lineage>
</organism>
<proteinExistence type="inferred from homology"/>
<name>FTSK_AGRFC</name>
<evidence type="ECO:0000250" key="1"/>
<evidence type="ECO:0000255" key="2"/>
<evidence type="ECO:0000255" key="3">
    <source>
        <dbReference type="PROSITE-ProRule" id="PRU00289"/>
    </source>
</evidence>
<evidence type="ECO:0000256" key="4">
    <source>
        <dbReference type="SAM" id="MobiDB-lite"/>
    </source>
</evidence>
<evidence type="ECO:0000305" key="5"/>
<feature type="chain" id="PRO_0000098234" description="DNA translocase FtsK">
    <location>
        <begin position="1"/>
        <end position="891"/>
    </location>
</feature>
<feature type="transmembrane region" description="Helical" evidence="2">
    <location>
        <begin position="26"/>
        <end position="46"/>
    </location>
</feature>
<feature type="transmembrane region" description="Helical" evidence="2">
    <location>
        <begin position="81"/>
        <end position="101"/>
    </location>
</feature>
<feature type="transmembrane region" description="Helical" evidence="2">
    <location>
        <begin position="114"/>
        <end position="134"/>
    </location>
</feature>
<feature type="transmembrane region" description="Helical" evidence="2">
    <location>
        <begin position="141"/>
        <end position="161"/>
    </location>
</feature>
<feature type="transmembrane region" description="Helical" evidence="2">
    <location>
        <begin position="169"/>
        <end position="189"/>
    </location>
</feature>
<feature type="transmembrane region" description="Helical" evidence="2">
    <location>
        <begin position="225"/>
        <end position="245"/>
    </location>
</feature>
<feature type="topological domain" description="Cytoplasmic" evidence="2">
    <location>
        <begin position="246"/>
        <end position="891"/>
    </location>
</feature>
<feature type="domain" description="FtsK" evidence="3">
    <location>
        <begin position="524"/>
        <end position="743"/>
    </location>
</feature>
<feature type="region of interest" description="Disordered" evidence="4">
    <location>
        <begin position="286"/>
        <end position="373"/>
    </location>
</feature>
<feature type="region of interest" description="Disordered" evidence="4">
    <location>
        <begin position="804"/>
        <end position="824"/>
    </location>
</feature>
<feature type="compositionally biased region" description="Basic and acidic residues" evidence="4">
    <location>
        <begin position="289"/>
        <end position="302"/>
    </location>
</feature>
<feature type="binding site" evidence="3">
    <location>
        <begin position="544"/>
        <end position="549"/>
    </location>
    <ligand>
        <name>ATP</name>
        <dbReference type="ChEBI" id="CHEBI:30616"/>
    </ligand>
</feature>
<gene>
    <name type="primary">ftsK</name>
    <name type="ordered locus">Atu2759</name>
    <name type="ORF">AGR_C_5003</name>
</gene>
<sequence length="891" mass="96835">MGRMHSPTFDGRHTRFVLTAFFVRQIMALAGFALLATIALGIAALATWNVADPSLSYATGNQPTNLLGYSGAIFADIVMQFLGLSAIIAFLPIIAWAIALIAGRKFNRIPARLVAWVAGAIVCAASLGCFPAPVTWPLPNGIGGVIGDMILRFPALFIGAYPTGTIATILGVIFAAPAAWLMLFAAGIVGGLDDELEREEAVPVATSKARAAREAEEDDEDDGEGFFANMLAFGAIAHYWYITQARLRRLFGLKSKSLHTEFEHPYDFNEYEFGTLNEPSRLKTAINRLDQRSEPSFEERAASRRQMSPPSIALDHDNNADDEPPFDADGRRLPNGILSDDESDDKFTPRQAPGRGQPRITAPSARPKPSERVAREAQASFIAADGFQLPTVHLLAEPKNVVRDNTLSEEVLEQNARLLEGVLEDFGVKGEIIHVRPGPVVTLYELEPAPGIKSSRVIGLADDIARSMSAIAARVAVVPGRNAIGIELPNQTRETVFLRELVGSRDFENSKAKLAMALGKTIGGEPVIADLAKMPHLLVAGTTGSGKSVAINTMILSLIYRMSPEQCRLIMIDPKMLELSIYDGIPHLLSPVVTDPKKAVVALKWTVREMEERYKKMSKIGVRNIDGFNSRVQQALDKGEILTRTVQTGFDRQTGEAMYETEEFDLKPLPYIVVIIDEMADLMMVAGKDIEGAVQRLAQMARAAGIHVIMATQRPSVDVITGTIKANFPTRISFQVTSKIDSRTILGEQGAEQLLGMGDMLYMAGGGRIQRVHGPFVSDNEVEEIVAYLKTQGSPEYLEAITEEEDEDGAGSGPAGAGNFSDSEDPYDQAVAVVLRDGKASTSYVQRRLGIGYNRAASLIERMEQEGIIGPANHAGKREILVPTEADIIER</sequence>
<keyword id="KW-0067">ATP-binding</keyword>
<keyword id="KW-0131">Cell cycle</keyword>
<keyword id="KW-0132">Cell division</keyword>
<keyword id="KW-0997">Cell inner membrane</keyword>
<keyword id="KW-1003">Cell membrane</keyword>
<keyword id="KW-0159">Chromosome partition</keyword>
<keyword id="KW-0238">DNA-binding</keyword>
<keyword id="KW-0472">Membrane</keyword>
<keyword id="KW-0547">Nucleotide-binding</keyword>
<keyword id="KW-1185">Reference proteome</keyword>
<keyword id="KW-0812">Transmembrane</keyword>
<keyword id="KW-1133">Transmembrane helix</keyword>